<proteinExistence type="inferred from homology"/>
<sequence length="109" mass="11395">MIRYTKLPATCAVLLLAAGSVMAQVQPISTLPLQAQGENRWLLPAGEYHGQFVIDQPMQLRCAAGACCGPTGQGSALIIEASDVSVEGCTLLNWGRDLTAMDAGVHIAA</sequence>
<feature type="signal peptide" evidence="2">
    <location>
        <begin position="1"/>
        <end position="23"/>
    </location>
</feature>
<feature type="chain" id="PRO_0000031834" description="Probable ABC transporter binding protein NosD">
    <location>
        <begin position="24"/>
        <end position="109" status="greater than"/>
    </location>
</feature>
<feature type="non-terminal residue">
    <location>
        <position position="109"/>
    </location>
</feature>
<reference key="1">
    <citation type="journal article" date="1992" name="Eur. J. Biochem.">
        <title>Derived amino acid sequences of the nosZ gene (respiratory N2O reductase) from Alcaligenes eutrophus, Pseudomonas aeruginosa and Pseudomonas stutzeri reveal potential copper-binding residues. Implications for the CuA site of N2O reductase and cytochrome-c oxidase.</title>
        <authorList>
            <person name="Zumft W.G."/>
            <person name="Dreusch A."/>
            <person name="Loechelt S."/>
            <person name="Cuypers H."/>
            <person name="Friedrich B."/>
            <person name="Schneider B."/>
        </authorList>
    </citation>
    <scope>NUCLEOTIDE SEQUENCE [GENOMIC DNA]</scope>
    <source>
        <strain>ATCC 10145 / DSM 50071 / JCM 5962 / LMG 1242 / NBRC 12689 / NCIMB 8295 / NCTC 10332 / NRRL B-771</strain>
    </source>
</reference>
<keyword id="KW-0574">Periplasm</keyword>
<keyword id="KW-0732">Signal</keyword>
<organism>
    <name type="scientific">Pseudomonas aeruginosa</name>
    <dbReference type="NCBI Taxonomy" id="287"/>
    <lineage>
        <taxon>Bacteria</taxon>
        <taxon>Pseudomonadati</taxon>
        <taxon>Pseudomonadota</taxon>
        <taxon>Gammaproteobacteria</taxon>
        <taxon>Pseudomonadales</taxon>
        <taxon>Pseudomonadaceae</taxon>
        <taxon>Pseudomonas</taxon>
    </lineage>
</organism>
<dbReference type="EMBL" id="X65277">
    <property type="protein sequence ID" value="CAA46382.1"/>
    <property type="molecule type" value="Genomic_DNA"/>
</dbReference>
<dbReference type="SMR" id="Q01708"/>
<dbReference type="GO" id="GO:0042597">
    <property type="term" value="C:periplasmic space"/>
    <property type="evidence" value="ECO:0007669"/>
    <property type="project" value="UniProtKB-SubCell"/>
</dbReference>
<dbReference type="InterPro" id="IPR011050">
    <property type="entry name" value="Pectin_lyase_fold/virulence"/>
</dbReference>
<dbReference type="SUPFAM" id="SSF51126">
    <property type="entry name" value="Pectin lyase-like"/>
    <property type="match status" value="1"/>
</dbReference>
<evidence type="ECO:0000250" key="1">
    <source>
        <dbReference type="UniProtKB" id="P19843"/>
    </source>
</evidence>
<evidence type="ECO:0000255" key="2"/>
<evidence type="ECO:0000305" key="3"/>
<name>NOSD_PSEAI</name>
<gene>
    <name type="primary">nosD</name>
</gene>
<protein>
    <recommendedName>
        <fullName evidence="1">Probable ABC transporter binding protein NosD</fullName>
    </recommendedName>
</protein>
<comment type="function">
    <text evidence="1">Required for the assembly of the copper chromophores of nitrous oxide reductase. Could be part of the ABC transporter complex NosDFY.</text>
</comment>
<comment type="subunit">
    <text evidence="1">The complex may be composed of an ATP-binding protein (NosF), a transmembrane protein (NosY) and a solute-binding protein (NosD).</text>
</comment>
<comment type="subcellular location">
    <subcellularLocation>
        <location evidence="1">Periplasm</location>
    </subcellularLocation>
</comment>
<comment type="similarity">
    <text evidence="3">Belongs to the NosD family.</text>
</comment>
<accession>Q01708</accession>